<sequence length="379" mass="42519">MTNIRKTHPLAKIVNDSFIDLPAPSNISAWWNFGSLLGVCLILQIATGLFLAMHYTSDTATAFSSVTHICRDVNYGWIIRYMHANGASMFFICLFMHVGRGLYYGSYVFMETWNIGIILLFATMATAFMGYVLPWGQMSFWGATVITNLLSAIPYIGTDLVEWIWGGFSVDKATLTRFFAFHFILPFIIAALAMVHLLFLHETGSNNPSGITSDSDKIPFHPYYTIKDILGVLLLLSVLMSLVLFSPDLLGDPDNYTPANPLSTPPHIKPEWYFLFAYAILRSIPNKLGGVLALVFSILILALIPHLHTSKQRGMMFRPLSQCLFWLLTADLLTLTWIGGQPVEHPFIIIGQIASILYFAILLILMPTISIIENNLLKW</sequence>
<evidence type="ECO:0000250" key="1">
    <source>
        <dbReference type="UniProtKB" id="P00157"/>
    </source>
</evidence>
<evidence type="ECO:0000255" key="2">
    <source>
        <dbReference type="PROSITE-ProRule" id="PRU00967"/>
    </source>
</evidence>
<evidence type="ECO:0000255" key="3">
    <source>
        <dbReference type="PROSITE-ProRule" id="PRU00968"/>
    </source>
</evidence>
<feature type="chain" id="PRO_0000235175" description="Cytochrome b">
    <location>
        <begin position="1"/>
        <end position="379"/>
    </location>
</feature>
<feature type="transmembrane region" description="Helical" evidence="1">
    <location>
        <begin position="33"/>
        <end position="53"/>
    </location>
</feature>
<feature type="transmembrane region" description="Helical" evidence="1">
    <location>
        <begin position="77"/>
        <end position="98"/>
    </location>
</feature>
<feature type="transmembrane region" description="Helical" evidence="1">
    <location>
        <begin position="113"/>
        <end position="133"/>
    </location>
</feature>
<feature type="transmembrane region" description="Helical" evidence="1">
    <location>
        <begin position="178"/>
        <end position="198"/>
    </location>
</feature>
<feature type="transmembrane region" description="Helical" evidence="1">
    <location>
        <begin position="226"/>
        <end position="246"/>
    </location>
</feature>
<feature type="transmembrane region" description="Helical" evidence="1">
    <location>
        <begin position="288"/>
        <end position="308"/>
    </location>
</feature>
<feature type="transmembrane region" description="Helical" evidence="1">
    <location>
        <begin position="320"/>
        <end position="340"/>
    </location>
</feature>
<feature type="transmembrane region" description="Helical" evidence="1">
    <location>
        <begin position="347"/>
        <end position="367"/>
    </location>
</feature>
<feature type="binding site" description="axial binding residue" evidence="1">
    <location>
        <position position="83"/>
    </location>
    <ligand>
        <name>heme b</name>
        <dbReference type="ChEBI" id="CHEBI:60344"/>
        <label>b562</label>
    </ligand>
    <ligandPart>
        <name>Fe</name>
        <dbReference type="ChEBI" id="CHEBI:18248"/>
    </ligandPart>
</feature>
<feature type="binding site" description="axial binding residue" evidence="1">
    <location>
        <position position="97"/>
    </location>
    <ligand>
        <name>heme b</name>
        <dbReference type="ChEBI" id="CHEBI:60344"/>
        <label>b566</label>
    </ligand>
    <ligandPart>
        <name>Fe</name>
        <dbReference type="ChEBI" id="CHEBI:18248"/>
    </ligandPart>
</feature>
<feature type="binding site" description="axial binding residue" evidence="1">
    <location>
        <position position="182"/>
    </location>
    <ligand>
        <name>heme b</name>
        <dbReference type="ChEBI" id="CHEBI:60344"/>
        <label>b562</label>
    </ligand>
    <ligandPart>
        <name>Fe</name>
        <dbReference type="ChEBI" id="CHEBI:18248"/>
    </ligandPart>
</feature>
<feature type="binding site" description="axial binding residue" evidence="1">
    <location>
        <position position="196"/>
    </location>
    <ligand>
        <name>heme b</name>
        <dbReference type="ChEBI" id="CHEBI:60344"/>
        <label>b566</label>
    </ligand>
    <ligandPart>
        <name>Fe</name>
        <dbReference type="ChEBI" id="CHEBI:18248"/>
    </ligandPart>
</feature>
<feature type="binding site" evidence="1">
    <location>
        <position position="201"/>
    </location>
    <ligand>
        <name>a ubiquinone</name>
        <dbReference type="ChEBI" id="CHEBI:16389"/>
    </ligand>
</feature>
<dbReference type="EMBL" id="AY928669">
    <property type="protein sequence ID" value="AAY18238.1"/>
    <property type="molecule type" value="Genomic_DNA"/>
</dbReference>
<dbReference type="RefSeq" id="YP_778941.1">
    <property type="nucleotide sequence ID" value="NC_008434.1"/>
</dbReference>
<dbReference type="SMR" id="Q3ZED1"/>
<dbReference type="GeneID" id="4355756"/>
<dbReference type="KEGG" id="vvp:4355756"/>
<dbReference type="CTD" id="4519"/>
<dbReference type="OrthoDB" id="15293at33554"/>
<dbReference type="Proteomes" id="UP000286640">
    <property type="component" value="Mitochondrion MT"/>
</dbReference>
<dbReference type="GO" id="GO:0005743">
    <property type="term" value="C:mitochondrial inner membrane"/>
    <property type="evidence" value="ECO:0007669"/>
    <property type="project" value="UniProtKB-SubCell"/>
</dbReference>
<dbReference type="GO" id="GO:0045275">
    <property type="term" value="C:respiratory chain complex III"/>
    <property type="evidence" value="ECO:0007669"/>
    <property type="project" value="InterPro"/>
</dbReference>
<dbReference type="GO" id="GO:0046872">
    <property type="term" value="F:metal ion binding"/>
    <property type="evidence" value="ECO:0007669"/>
    <property type="project" value="UniProtKB-KW"/>
</dbReference>
<dbReference type="GO" id="GO:0008121">
    <property type="term" value="F:ubiquinol-cytochrome-c reductase activity"/>
    <property type="evidence" value="ECO:0007669"/>
    <property type="project" value="InterPro"/>
</dbReference>
<dbReference type="GO" id="GO:0006122">
    <property type="term" value="P:mitochondrial electron transport, ubiquinol to cytochrome c"/>
    <property type="evidence" value="ECO:0007669"/>
    <property type="project" value="TreeGrafter"/>
</dbReference>
<dbReference type="CDD" id="cd00290">
    <property type="entry name" value="cytochrome_b_C"/>
    <property type="match status" value="1"/>
</dbReference>
<dbReference type="CDD" id="cd00284">
    <property type="entry name" value="Cytochrome_b_N"/>
    <property type="match status" value="1"/>
</dbReference>
<dbReference type="FunFam" id="1.20.810.10:FF:000002">
    <property type="entry name" value="Cytochrome b"/>
    <property type="match status" value="1"/>
</dbReference>
<dbReference type="Gene3D" id="1.20.810.10">
    <property type="entry name" value="Cytochrome Bc1 Complex, Chain C"/>
    <property type="match status" value="1"/>
</dbReference>
<dbReference type="InterPro" id="IPR005798">
    <property type="entry name" value="Cyt_b/b6_C"/>
</dbReference>
<dbReference type="InterPro" id="IPR036150">
    <property type="entry name" value="Cyt_b/b6_C_sf"/>
</dbReference>
<dbReference type="InterPro" id="IPR005797">
    <property type="entry name" value="Cyt_b/b6_N"/>
</dbReference>
<dbReference type="InterPro" id="IPR027387">
    <property type="entry name" value="Cytb/b6-like_sf"/>
</dbReference>
<dbReference type="InterPro" id="IPR030689">
    <property type="entry name" value="Cytochrome_b"/>
</dbReference>
<dbReference type="InterPro" id="IPR048260">
    <property type="entry name" value="Cytochrome_b_C_euk/bac"/>
</dbReference>
<dbReference type="InterPro" id="IPR048259">
    <property type="entry name" value="Cytochrome_b_N_euk/bac"/>
</dbReference>
<dbReference type="InterPro" id="IPR016174">
    <property type="entry name" value="Di-haem_cyt_TM"/>
</dbReference>
<dbReference type="PANTHER" id="PTHR19271">
    <property type="entry name" value="CYTOCHROME B"/>
    <property type="match status" value="1"/>
</dbReference>
<dbReference type="PANTHER" id="PTHR19271:SF16">
    <property type="entry name" value="CYTOCHROME B"/>
    <property type="match status" value="1"/>
</dbReference>
<dbReference type="Pfam" id="PF00032">
    <property type="entry name" value="Cytochrom_B_C"/>
    <property type="match status" value="1"/>
</dbReference>
<dbReference type="Pfam" id="PF00033">
    <property type="entry name" value="Cytochrome_B"/>
    <property type="match status" value="1"/>
</dbReference>
<dbReference type="PIRSF" id="PIRSF038885">
    <property type="entry name" value="COB"/>
    <property type="match status" value="1"/>
</dbReference>
<dbReference type="SUPFAM" id="SSF81648">
    <property type="entry name" value="a domain/subunit of cytochrome bc1 complex (Ubiquinol-cytochrome c reductase)"/>
    <property type="match status" value="1"/>
</dbReference>
<dbReference type="SUPFAM" id="SSF81342">
    <property type="entry name" value="Transmembrane di-heme cytochromes"/>
    <property type="match status" value="1"/>
</dbReference>
<dbReference type="PROSITE" id="PS51003">
    <property type="entry name" value="CYTB_CTER"/>
    <property type="match status" value="1"/>
</dbReference>
<dbReference type="PROSITE" id="PS51002">
    <property type="entry name" value="CYTB_NTER"/>
    <property type="match status" value="1"/>
</dbReference>
<organism>
    <name type="scientific">Vulpes vulpes</name>
    <name type="common">Red fox</name>
    <dbReference type="NCBI Taxonomy" id="9627"/>
    <lineage>
        <taxon>Eukaryota</taxon>
        <taxon>Metazoa</taxon>
        <taxon>Chordata</taxon>
        <taxon>Craniata</taxon>
        <taxon>Vertebrata</taxon>
        <taxon>Euteleostomi</taxon>
        <taxon>Mammalia</taxon>
        <taxon>Eutheria</taxon>
        <taxon>Laurasiatheria</taxon>
        <taxon>Carnivora</taxon>
        <taxon>Caniformia</taxon>
        <taxon>Canidae</taxon>
        <taxon>Vulpes</taxon>
    </lineage>
</organism>
<geneLocation type="mitochondrion"/>
<reference key="1">
    <citation type="journal article" date="2006" name="Mol. Phylogenet. Evol.">
        <title>Molecular systematics of the Hyaenidae: relationships of a relictual lineage resolved by a molecular supermatrix.</title>
        <authorList>
            <person name="Koepfli K.-P."/>
            <person name="Jenks S.M."/>
            <person name="Eizirik E."/>
            <person name="Zahirpour T."/>
            <person name="Van Valkenburgh B."/>
            <person name="Wayne R.K."/>
        </authorList>
    </citation>
    <scope>NUCLEOTIDE SEQUENCE [GENOMIC DNA]</scope>
</reference>
<protein>
    <recommendedName>
        <fullName>Cytochrome b</fullName>
    </recommendedName>
    <alternativeName>
        <fullName>Complex III subunit 3</fullName>
    </alternativeName>
    <alternativeName>
        <fullName>Complex III subunit III</fullName>
    </alternativeName>
    <alternativeName>
        <fullName>Cytochrome b-c1 complex subunit 3</fullName>
    </alternativeName>
    <alternativeName>
        <fullName>Ubiquinol-cytochrome-c reductase complex cytochrome b subunit</fullName>
    </alternativeName>
</protein>
<gene>
    <name type="primary">MT-CYB</name>
    <name type="synonym">COB</name>
    <name type="synonym">CYTB</name>
    <name type="synonym">MTCYB</name>
</gene>
<accession>Q3ZED1</accession>
<comment type="function">
    <text evidence="1">Component of the ubiquinol-cytochrome c reductase complex (complex III or cytochrome b-c1 complex) that is part of the mitochondrial respiratory chain. The b-c1 complex mediates electron transfer from ubiquinol to cytochrome c. Contributes to the generation of a proton gradient across the mitochondrial membrane that is then used for ATP synthesis.</text>
</comment>
<comment type="cofactor">
    <cofactor evidence="1">
        <name>heme b</name>
        <dbReference type="ChEBI" id="CHEBI:60344"/>
    </cofactor>
    <text evidence="1">Binds 2 heme b groups non-covalently.</text>
</comment>
<comment type="subunit">
    <text evidence="1">The cytochrome bc1 complex contains 11 subunits: 3 respiratory subunits (MT-CYB, CYC1 and UQCRFS1), 2 core proteins (UQCRC1 and UQCRC2) and 6 low-molecular weight proteins (UQCRH/QCR6, UQCRB/QCR7, UQCRQ/QCR8, UQCR10/QCR9, UQCR11/QCR10 and a cleavage product of UQCRFS1). This cytochrome bc1 complex then forms a dimer.</text>
</comment>
<comment type="subcellular location">
    <subcellularLocation>
        <location evidence="1">Mitochondrion inner membrane</location>
        <topology evidence="1">Multi-pass membrane protein</topology>
    </subcellularLocation>
</comment>
<comment type="similarity">
    <text evidence="2 3">Belongs to the cytochrome b family.</text>
</comment>
<comment type="caution">
    <text evidence="1">The full-length protein contains only eight transmembrane helices, not nine as predicted by bioinformatics tools.</text>
</comment>
<proteinExistence type="inferred from homology"/>
<keyword id="KW-0249">Electron transport</keyword>
<keyword id="KW-0349">Heme</keyword>
<keyword id="KW-0408">Iron</keyword>
<keyword id="KW-0472">Membrane</keyword>
<keyword id="KW-0479">Metal-binding</keyword>
<keyword id="KW-0496">Mitochondrion</keyword>
<keyword id="KW-0999">Mitochondrion inner membrane</keyword>
<keyword id="KW-1185">Reference proteome</keyword>
<keyword id="KW-0679">Respiratory chain</keyword>
<keyword id="KW-0812">Transmembrane</keyword>
<keyword id="KW-1133">Transmembrane helix</keyword>
<keyword id="KW-0813">Transport</keyword>
<keyword id="KW-0830">Ubiquinone</keyword>
<name>CYB_VULVU</name>